<feature type="chain" id="PRO_0000214304" description="Ion-translocating oxidoreductase complex subunit E">
    <location>
        <begin position="1"/>
        <end position="243"/>
    </location>
</feature>
<feature type="transmembrane region" description="Helical" evidence="1">
    <location>
        <begin position="40"/>
        <end position="60"/>
    </location>
</feature>
<feature type="transmembrane region" description="Helical" evidence="1">
    <location>
        <begin position="72"/>
        <end position="92"/>
    </location>
</feature>
<feature type="transmembrane region" description="Helical" evidence="1">
    <location>
        <begin position="94"/>
        <end position="114"/>
    </location>
</feature>
<feature type="transmembrane region" description="Helical" evidence="1">
    <location>
        <begin position="129"/>
        <end position="149"/>
    </location>
</feature>
<feature type="transmembrane region" description="Helical" evidence="1">
    <location>
        <begin position="152"/>
        <end position="172"/>
    </location>
</feature>
<feature type="transmembrane region" description="Helical" evidence="1">
    <location>
        <begin position="183"/>
        <end position="203"/>
    </location>
</feature>
<feature type="sequence conflict" description="In Ref. 1; CAA51397." evidence="5" ref="1">
    <original>G</original>
    <variation>A</variation>
    <location>
        <position position="193"/>
    </location>
</feature>
<feature type="sequence conflict" description="In Ref. 1; CAA51397." evidence="5" ref="1">
    <original>R</original>
    <variation>P</variation>
    <location>
        <position position="205"/>
    </location>
</feature>
<protein>
    <recommendedName>
        <fullName evidence="1 5">Ion-translocating oxidoreductase complex subunit E</fullName>
        <ecNumber evidence="1 5">7.-.-.-</ecNumber>
    </recommendedName>
    <alternativeName>
        <fullName evidence="5">Nitrogen fixation protein RnfE</fullName>
    </alternativeName>
    <alternativeName>
        <fullName evidence="1 5">Rnf electron transport complex subunit E</fullName>
    </alternativeName>
</protein>
<dbReference type="EC" id="7.-.-.-" evidence="1 5"/>
<dbReference type="EMBL" id="X72888">
    <property type="protein sequence ID" value="CAA51397.1"/>
    <property type="status" value="ALT_INIT"/>
    <property type="molecule type" value="Genomic_DNA"/>
</dbReference>
<dbReference type="EMBL" id="Y11913">
    <property type="protein sequence ID" value="CAA72666.1"/>
    <property type="molecule type" value="Genomic_DNA"/>
</dbReference>
<dbReference type="PIR" id="S39906">
    <property type="entry name" value="S39906"/>
</dbReference>
<dbReference type="RefSeq" id="WP_013068988.1">
    <property type="nucleotide sequence ID" value="NZ_VIBE01000016.1"/>
</dbReference>
<dbReference type="SMR" id="P97055"/>
<dbReference type="TCDB" id="3.D.6.1.1">
    <property type="family name" value="the ion (h(+) or na(+))-translocating nadh:ferredoxin oxidoreductase (nfo or rnf) family"/>
</dbReference>
<dbReference type="OMA" id="RIEVFHT"/>
<dbReference type="GO" id="GO:0005886">
    <property type="term" value="C:plasma membrane"/>
    <property type="evidence" value="ECO:0007669"/>
    <property type="project" value="UniProtKB-UniRule"/>
</dbReference>
<dbReference type="GO" id="GO:0042717">
    <property type="term" value="C:plasma membrane-derived chromatophore membrane"/>
    <property type="evidence" value="ECO:0007669"/>
    <property type="project" value="UniProtKB-SubCell"/>
</dbReference>
<dbReference type="GO" id="GO:0022900">
    <property type="term" value="P:electron transport chain"/>
    <property type="evidence" value="ECO:0007669"/>
    <property type="project" value="UniProtKB-UniRule"/>
</dbReference>
<dbReference type="GO" id="GO:0009399">
    <property type="term" value="P:nitrogen fixation"/>
    <property type="evidence" value="ECO:0007669"/>
    <property type="project" value="UniProtKB-KW"/>
</dbReference>
<dbReference type="HAMAP" id="MF_00478">
    <property type="entry name" value="RsxE_RnfE"/>
    <property type="match status" value="1"/>
</dbReference>
<dbReference type="InterPro" id="IPR003667">
    <property type="entry name" value="NqrDE/RnfAE"/>
</dbReference>
<dbReference type="InterPro" id="IPR010968">
    <property type="entry name" value="RnfE"/>
</dbReference>
<dbReference type="NCBIfam" id="NF009070">
    <property type="entry name" value="PRK12405.1"/>
    <property type="match status" value="1"/>
</dbReference>
<dbReference type="NCBIfam" id="TIGR01948">
    <property type="entry name" value="rnfE"/>
    <property type="match status" value="1"/>
</dbReference>
<dbReference type="PANTHER" id="PTHR30586">
    <property type="entry name" value="ELECTRON TRANSPORT COMPLEX PROTEIN RNFE"/>
    <property type="match status" value="1"/>
</dbReference>
<dbReference type="PANTHER" id="PTHR30586:SF0">
    <property type="entry name" value="ION-TRANSLOCATING OXIDOREDUCTASE COMPLEX SUBUNIT E"/>
    <property type="match status" value="1"/>
</dbReference>
<dbReference type="Pfam" id="PF02508">
    <property type="entry name" value="Rnf-Nqr"/>
    <property type="match status" value="1"/>
</dbReference>
<dbReference type="PIRSF" id="PIRSF006102">
    <property type="entry name" value="NQR_DE"/>
    <property type="match status" value="1"/>
</dbReference>
<name>RNFE_RHOCA</name>
<accession>P97055</accession>
<accession>Q52714</accession>
<comment type="function">
    <text evidence="1 2">Part of a membrane-bound complex that couples electron transfer with translocation of ions across the membrane (By similarity). Required for nitrogen fixation. Involved in electron transfer to nitrogenase (PubMed:8264535).</text>
</comment>
<comment type="subunit">
    <text evidence="1 6">The complex is composed of six subunits: RnfA, RnfB, RnfC, RnfD, RnfE and RnfG.</text>
</comment>
<comment type="subcellular location">
    <subcellularLocation>
        <location evidence="1 5">Cellular chromatophore membrane</location>
        <topology evidence="1">Multi-pass membrane protein</topology>
    </subcellularLocation>
</comment>
<comment type="induction">
    <text evidence="3">Expression is reduced under iron-limiting conditions.</text>
</comment>
<comment type="similarity">
    <text evidence="1">Belongs to the NqrDE/RnfAE family.</text>
</comment>
<comment type="sequence caution" evidence="5">
    <conflict type="erroneous initiation">
        <sequence resource="EMBL-CDS" id="CAA51397"/>
    </conflict>
</comment>
<evidence type="ECO:0000255" key="1">
    <source>
        <dbReference type="HAMAP-Rule" id="MF_00478"/>
    </source>
</evidence>
<evidence type="ECO:0000269" key="2">
    <source>
    </source>
</evidence>
<evidence type="ECO:0000269" key="3">
    <source>
    </source>
</evidence>
<evidence type="ECO:0000303" key="4">
    <source>
    </source>
</evidence>
<evidence type="ECO:0000305" key="5"/>
<evidence type="ECO:0000305" key="6">
    <source>
    </source>
</evidence>
<proteinExistence type="evidence at protein level"/>
<keyword id="KW-0249">Electron transport</keyword>
<keyword id="KW-0472">Membrane</keyword>
<keyword id="KW-0535">Nitrogen fixation</keyword>
<keyword id="KW-1278">Translocase</keyword>
<keyword id="KW-0812">Transmembrane</keyword>
<keyword id="KW-1133">Transmembrane helix</keyword>
<keyword id="KW-0813">Transport</keyword>
<reference key="1">
    <citation type="journal article" date="1993" name="Mol. Gen. Genet.">
        <title>Identification of a new class of nitrogen fixation genes in Rhodobacter capsulatus: a putative membrane complex involved in electron transport to nitrogenase.</title>
        <authorList>
            <person name="Schmehl M."/>
            <person name="Jahn A."/>
            <person name="Meyer zu Vilsendorf A."/>
            <person name="Hennecke S."/>
            <person name="Masepohl B."/>
            <person name="Schuppler M."/>
            <person name="Marxer M."/>
            <person name="Oelze J."/>
            <person name="Klipp W."/>
        </authorList>
    </citation>
    <scope>NUCLEOTIDE SEQUENCE [GENOMIC DNA]</scope>
    <scope>FUNCTION</scope>
    <scope>GENE NAME</scope>
    <source>
        <strain>B10S</strain>
    </source>
</reference>
<reference key="2">
    <citation type="journal article" date="1998" name="Eur. J. Biochem.">
        <title>Overexpression in Escherichia coli of the rnf genes from Rhodobacter capsulatus -- characterization of two membrane-bound iron-sulfur proteins.</title>
        <authorList>
            <person name="Jouanneau Y."/>
            <person name="Jeong H.-S."/>
            <person name="Hugo N."/>
            <person name="Meyer C."/>
            <person name="Willison J.C."/>
        </authorList>
    </citation>
    <scope>NUCLEOTIDE SEQUENCE [GENOMIC DNA]</scope>
    <scope>SUBUNIT</scope>
    <scope>INDUCTION</scope>
    <source>
        <strain>ATCC 33303 / B10</strain>
    </source>
</reference>
<sequence length="243" mass="25867">MSESYAKIARDGLWDKNIVTGQMLALCPTLAITGTATNGLGMGLATTVVLILSNVVISALRKTIAPEIRIPAFILIIAAIVTVVDLALNAWLHDLHKVLGLFIALIVTNCAILGRAEAFASRFGVLASALDGLMMGIGFTLALVVVGAIREILGSGTLFAQASLLLGPHFAFMELQIFPDYPGFLIMILPPGGFLVVGGLFALKRIIDARKPTIEQEIKQMRTERVFTAAGVLKPKLETGEEA</sequence>
<gene>
    <name evidence="1 4" type="primary">rnfE</name>
</gene>
<organism>
    <name type="scientific">Rhodobacter capsulatus</name>
    <name type="common">Rhodopseudomonas capsulata</name>
    <dbReference type="NCBI Taxonomy" id="1061"/>
    <lineage>
        <taxon>Bacteria</taxon>
        <taxon>Pseudomonadati</taxon>
        <taxon>Pseudomonadota</taxon>
        <taxon>Alphaproteobacteria</taxon>
        <taxon>Rhodobacterales</taxon>
        <taxon>Rhodobacter group</taxon>
        <taxon>Rhodobacter</taxon>
    </lineage>
</organism>